<reference key="1">
    <citation type="journal article" date="2003" name="Nature">
        <title>The genome sequence of the filamentous fungus Neurospora crassa.</title>
        <authorList>
            <person name="Galagan J.E."/>
            <person name="Calvo S.E."/>
            <person name="Borkovich K.A."/>
            <person name="Selker E.U."/>
            <person name="Read N.D."/>
            <person name="Jaffe D.B."/>
            <person name="FitzHugh W."/>
            <person name="Ma L.-J."/>
            <person name="Smirnov S."/>
            <person name="Purcell S."/>
            <person name="Rehman B."/>
            <person name="Elkins T."/>
            <person name="Engels R."/>
            <person name="Wang S."/>
            <person name="Nielsen C.B."/>
            <person name="Butler J."/>
            <person name="Endrizzi M."/>
            <person name="Qui D."/>
            <person name="Ianakiev P."/>
            <person name="Bell-Pedersen D."/>
            <person name="Nelson M.A."/>
            <person name="Werner-Washburne M."/>
            <person name="Selitrennikoff C.P."/>
            <person name="Kinsey J.A."/>
            <person name="Braun E.L."/>
            <person name="Zelter A."/>
            <person name="Schulte U."/>
            <person name="Kothe G.O."/>
            <person name="Jedd G."/>
            <person name="Mewes H.-W."/>
            <person name="Staben C."/>
            <person name="Marcotte E."/>
            <person name="Greenberg D."/>
            <person name="Roy A."/>
            <person name="Foley K."/>
            <person name="Naylor J."/>
            <person name="Stange-Thomann N."/>
            <person name="Barrett R."/>
            <person name="Gnerre S."/>
            <person name="Kamal M."/>
            <person name="Kamvysselis M."/>
            <person name="Mauceli E.W."/>
            <person name="Bielke C."/>
            <person name="Rudd S."/>
            <person name="Frishman D."/>
            <person name="Krystofova S."/>
            <person name="Rasmussen C."/>
            <person name="Metzenberg R.L."/>
            <person name="Perkins D.D."/>
            <person name="Kroken S."/>
            <person name="Cogoni C."/>
            <person name="Macino G."/>
            <person name="Catcheside D.E.A."/>
            <person name="Li W."/>
            <person name="Pratt R.J."/>
            <person name="Osmani S.A."/>
            <person name="DeSouza C.P.C."/>
            <person name="Glass N.L."/>
            <person name="Orbach M.J."/>
            <person name="Berglund J.A."/>
            <person name="Voelker R."/>
            <person name="Yarden O."/>
            <person name="Plamann M."/>
            <person name="Seiler S."/>
            <person name="Dunlap J.C."/>
            <person name="Radford A."/>
            <person name="Aramayo R."/>
            <person name="Natvig D.O."/>
            <person name="Alex L.A."/>
            <person name="Mannhaupt G."/>
            <person name="Ebbole D.J."/>
            <person name="Freitag M."/>
            <person name="Paulsen I."/>
            <person name="Sachs M.S."/>
            <person name="Lander E.S."/>
            <person name="Nusbaum C."/>
            <person name="Birren B.W."/>
        </authorList>
    </citation>
    <scope>NUCLEOTIDE SEQUENCE [LARGE SCALE GENOMIC DNA]</scope>
    <source>
        <strain>ATCC 24698 / 74-OR23-1A / CBS 708.71 / DSM 1257 / FGSC 987</strain>
    </source>
</reference>
<reference key="2">
    <citation type="journal article" date="2013" name="FEBS Lett.">
        <title>Discovery of cellobionic acid phosphorylase in cellulolytic bacteria and fungi.</title>
        <authorList>
            <person name="Nihira T."/>
            <person name="Saito Y."/>
            <person name="Nishimoto M."/>
            <person name="Kitaoka M."/>
            <person name="Igarashi K."/>
            <person name="Ohtsubo K."/>
            <person name="Nakai H."/>
        </authorList>
    </citation>
    <scope>FUNCTION</scope>
    <scope>CATALYTIC ACTIVITY</scope>
    <scope>SUBUNIT</scope>
    <scope>BIOPHYSICOCHEMICAL PROPERTIES</scope>
</reference>
<protein>
    <recommendedName>
        <fullName>Cellobionic acid phosphorylase</fullName>
        <ecNumber>2.4.1.321</ecNumber>
    </recommendedName>
    <alternativeName>
        <fullName>4-O-beta-D-glucopyranosyl-D-gluconate:phosphate alpha-D-glucosyltransferase</fullName>
    </alternativeName>
</protein>
<feature type="chain" id="PRO_0000430254" description="Cellobionic acid phosphorylase">
    <location>
        <begin position="1"/>
        <end position="791"/>
    </location>
</feature>
<feature type="active site" description="Proton donor" evidence="1">
    <location>
        <position position="478"/>
    </location>
</feature>
<gene>
    <name type="ORF">NCU09425</name>
</gene>
<keyword id="KW-0119">Carbohydrate metabolism</keyword>
<keyword id="KW-0136">Cellulose degradation</keyword>
<keyword id="KW-0328">Glycosyltransferase</keyword>
<keyword id="KW-0624">Polysaccharide degradation</keyword>
<keyword id="KW-1185">Reference proteome</keyword>
<keyword id="KW-0808">Transferase</keyword>
<name>CELAP_NEUCR</name>
<dbReference type="EC" id="2.4.1.321"/>
<dbReference type="EMBL" id="CM002242">
    <property type="protein sequence ID" value="EAA28929.1"/>
    <property type="molecule type" value="Genomic_DNA"/>
</dbReference>
<dbReference type="RefSeq" id="XP_958165.1">
    <property type="nucleotide sequence ID" value="XM_953072.2"/>
</dbReference>
<dbReference type="SMR" id="Q7S0S2"/>
<dbReference type="STRING" id="367110.Q7S0S2"/>
<dbReference type="CAZy" id="GH94">
    <property type="family name" value="Glycoside Hydrolase Family 94"/>
</dbReference>
<dbReference type="PaxDb" id="5141-EFNCRP00000009243"/>
<dbReference type="EnsemblFungi" id="EAA28929">
    <property type="protein sequence ID" value="EAA28929"/>
    <property type="gene ID" value="NCU09425"/>
</dbReference>
<dbReference type="GeneID" id="3874312"/>
<dbReference type="KEGG" id="ncr:NCU09425"/>
<dbReference type="VEuPathDB" id="FungiDB:NCU09425"/>
<dbReference type="HOGENOM" id="CLU_019054_0_0_1"/>
<dbReference type="InParanoid" id="Q7S0S2"/>
<dbReference type="OMA" id="YVYAQMI"/>
<dbReference type="OrthoDB" id="5337493at2759"/>
<dbReference type="BRENDA" id="2.4.1.321">
    <property type="organism ID" value="3627"/>
</dbReference>
<dbReference type="SABIO-RK" id="Q7S0S2"/>
<dbReference type="UniPathway" id="UPA00696"/>
<dbReference type="Proteomes" id="UP000001805">
    <property type="component" value="Chromosome 7, Linkage Group VII"/>
</dbReference>
<dbReference type="GO" id="GO:0030246">
    <property type="term" value="F:carbohydrate binding"/>
    <property type="evidence" value="ECO:0007669"/>
    <property type="project" value="InterPro"/>
</dbReference>
<dbReference type="GO" id="GO:0016758">
    <property type="term" value="F:hexosyltransferase activity"/>
    <property type="evidence" value="ECO:0000314"/>
    <property type="project" value="UniProtKB"/>
</dbReference>
<dbReference type="GO" id="GO:0030245">
    <property type="term" value="P:cellulose catabolic process"/>
    <property type="evidence" value="ECO:0000304"/>
    <property type="project" value="UniProtKB"/>
</dbReference>
<dbReference type="CDD" id="cd11748">
    <property type="entry name" value="GH94N_NdvB_like"/>
    <property type="match status" value="1"/>
</dbReference>
<dbReference type="FunFam" id="1.50.10.10:FF:000046">
    <property type="entry name" value="Cellobionic acid phosphorylase"/>
    <property type="match status" value="1"/>
</dbReference>
<dbReference type="FunFam" id="2.70.98.40:FF:000006">
    <property type="entry name" value="Cellobionic acid phosphorylase"/>
    <property type="match status" value="1"/>
</dbReference>
<dbReference type="Gene3D" id="1.50.10.10">
    <property type="match status" value="1"/>
</dbReference>
<dbReference type="Gene3D" id="2.70.98.40">
    <property type="entry name" value="Glycoside hydrolase, family 65, N-terminal domain"/>
    <property type="match status" value="1"/>
</dbReference>
<dbReference type="Gene3D" id="2.60.420.10">
    <property type="entry name" value="Maltose phosphorylase, domain 3"/>
    <property type="match status" value="1"/>
</dbReference>
<dbReference type="InterPro" id="IPR008928">
    <property type="entry name" value="6-hairpin_glycosidase_sf"/>
</dbReference>
<dbReference type="InterPro" id="IPR012341">
    <property type="entry name" value="6hp_glycosidase-like_sf"/>
</dbReference>
<dbReference type="InterPro" id="IPR011013">
    <property type="entry name" value="Gal_mutarotase_sf_dom"/>
</dbReference>
<dbReference type="InterPro" id="IPR033432">
    <property type="entry name" value="GH36_catalytic"/>
</dbReference>
<dbReference type="InterPro" id="IPR052047">
    <property type="entry name" value="GH94_Enzymes"/>
</dbReference>
<dbReference type="InterPro" id="IPR037814">
    <property type="entry name" value="GH94N_CBAP"/>
</dbReference>
<dbReference type="InterPro" id="IPR037018">
    <property type="entry name" value="Glyco_hydro_65_N_sf"/>
</dbReference>
<dbReference type="InterPro" id="IPR010383">
    <property type="entry name" value="Glyco_hydrolase_94"/>
</dbReference>
<dbReference type="PANTHER" id="PTHR37469:SF2">
    <property type="entry name" value="CELLOBIONIC ACID PHOSPHORYLASE"/>
    <property type="match status" value="1"/>
</dbReference>
<dbReference type="PANTHER" id="PTHR37469">
    <property type="entry name" value="CELLOBIONIC ACID PHOSPHORYLASE-RELATED"/>
    <property type="match status" value="1"/>
</dbReference>
<dbReference type="Pfam" id="PF17167">
    <property type="entry name" value="Glyco_hydro_36"/>
    <property type="match status" value="1"/>
</dbReference>
<dbReference type="Pfam" id="PF06165">
    <property type="entry name" value="Glyco_transf_36"/>
    <property type="match status" value="1"/>
</dbReference>
<dbReference type="SUPFAM" id="SSF74650">
    <property type="entry name" value="Galactose mutarotase-like"/>
    <property type="match status" value="1"/>
</dbReference>
<dbReference type="SUPFAM" id="SSF48208">
    <property type="entry name" value="Six-hairpin glycosidases"/>
    <property type="match status" value="1"/>
</dbReference>
<comment type="function">
    <text evidence="2">Catalyzes the reversible phosphorolysis of cellobionic acid (4-O-beta-D-glucopyranosyl-D-gluconate), a probable step in cellulose degradation. May be part of a metabolic pathway where cellobionic acid is converted into alpha-D-glucose 1-phosphate and D-gluconic acid to enter glycolysis and the pentose phosphate pathway, respectively. Produces 4-O-beta-D-glucopyranosyl-D-glucuronate from alpha-D-glucose 1-phosphate and D-glucuronate with low activity in the synthetic direction.</text>
</comment>
<comment type="catalytic activity">
    <reaction evidence="2">
        <text>4-O-beta-D-glucopyranosyl-D-gluconate + phosphate = D-gluconate + alpha-D-glucose 1-phosphate</text>
        <dbReference type="Rhea" id="RHEA:11564"/>
        <dbReference type="ChEBI" id="CHEBI:18391"/>
        <dbReference type="ChEBI" id="CHEBI:43474"/>
        <dbReference type="ChEBI" id="CHEBI:58601"/>
        <dbReference type="ChEBI" id="CHEBI:76825"/>
        <dbReference type="EC" id="2.4.1.321"/>
    </reaction>
</comment>
<comment type="biophysicochemical properties">
    <kinetics>
        <KM evidence="2">1 mM for 4-O-beta-D-glucopyranosyl-D-gluconate</KM>
        <KM evidence="2">0.1 mM for phosphate</KM>
    </kinetics>
</comment>
<comment type="pathway">
    <text>Glycan metabolism; cellulose degradation.</text>
</comment>
<comment type="subunit">
    <text evidence="2">Homodimer.</text>
</comment>
<comment type="similarity">
    <text evidence="3">Belongs to the glycosyl hydrolase 94 family. Cellobionic acid phosphorylase subfamily.</text>
</comment>
<evidence type="ECO:0000250" key="1">
    <source>
        <dbReference type="UniProtKB" id="Q76IQ9"/>
    </source>
</evidence>
<evidence type="ECO:0000269" key="2">
    <source>
    </source>
</evidence>
<evidence type="ECO:0000305" key="3"/>
<accession>Q7S0S2</accession>
<sequence>MTRKMPTLVRPTHNGERYEITNPTAMPKAAGFLWNQKMMIQITCRGFATAQFMQPEPAKYAYAPNIEAKTFMQPEPNYYAHHPGRFVYIKDEETGRLFSAPYEPVRAPHDRFVFSAGKTDVFWVIESMGIRVEMTMGLPTHHVAELWTIKVKNLSSRPRKLSVTPYFPIGYMSWMNQSAEWNHNLNGIVASCVTPYQKAADYFKNKYLKDKTYFLCDVPPDSWEASQQAFEGEGGLHNPSALQERNLSGSDARYETPTAAVQYKIALGTGEQQEYRFLFGPAHDEAEIGAMRSKYLSKEGFEQTAADYAAYMARGRGCLHVETPDKDLDNFINNWLPRQVYYHGDVNRLTTDPQTRNYLQDNMGMNYIKPEVSRRAFLTAIAQQEATGAMPDGILLVEGAELKYINQVPHTDHCVWLPVTLEAYLNETGDYSLLKEKVPSANGDKLTVFERFCRAMDWLLKSRDHRGLSYIAQGDWCDPMNMVGYKGKGVSGWLTLATAFSLNIWAKVCDHEGETDLAKRFREGADACNAAANEHLWDGEWFARGITDDNVVFGIKEDKEGRIWLNPQSWSILSGAASPEQIDKMLPQIDSHLNTPYGIQMFGPPYTKMREDVGRVTQKAIGSAENAAVYNHAGIFFIHSLYELGAQQDRAFTLLRQMLPGPTDTDYIQRGQLPIYIPNYYRGAWKECPRTAGRSSQLFNTGTVSWVYRCIIEGLCGLRGDGEGLLIRPQLPSSWNSMKVTREFRGATFNVDIRRGNVKEVTVRNGDKVLPAPHVKDIEPGQTYNLTVTIP</sequence>
<proteinExistence type="evidence at protein level"/>
<organism>
    <name type="scientific">Neurospora crassa (strain ATCC 24698 / 74-OR23-1A / CBS 708.71 / DSM 1257 / FGSC 987)</name>
    <dbReference type="NCBI Taxonomy" id="367110"/>
    <lineage>
        <taxon>Eukaryota</taxon>
        <taxon>Fungi</taxon>
        <taxon>Dikarya</taxon>
        <taxon>Ascomycota</taxon>
        <taxon>Pezizomycotina</taxon>
        <taxon>Sordariomycetes</taxon>
        <taxon>Sordariomycetidae</taxon>
        <taxon>Sordariales</taxon>
        <taxon>Sordariaceae</taxon>
        <taxon>Neurospora</taxon>
    </lineage>
</organism>